<gene>
    <name type="primary">ZNF514</name>
</gene>
<evidence type="ECO:0000255" key="1">
    <source>
        <dbReference type="PROSITE-ProRule" id="PRU00042"/>
    </source>
</evidence>
<evidence type="ECO:0000255" key="2">
    <source>
        <dbReference type="PROSITE-ProRule" id="PRU00119"/>
    </source>
</evidence>
<evidence type="ECO:0000305" key="3"/>
<proteinExistence type="evidence at protein level"/>
<comment type="function">
    <text>May be involved in transcriptional regulation.</text>
</comment>
<comment type="subcellular location">
    <subcellularLocation>
        <location evidence="3">Nucleus</location>
    </subcellularLocation>
</comment>
<comment type="similarity">
    <text evidence="3">Belongs to the krueppel C2H2-type zinc-finger protein family.</text>
</comment>
<accession>Q96K75</accession>
<accession>Q5JPJ3</accession>
<feature type="chain" id="PRO_0000047633" description="Zinc finger protein 514">
    <location>
        <begin position="1"/>
        <end position="400"/>
    </location>
</feature>
<feature type="domain" description="KRAB" evidence="2">
    <location>
        <begin position="1"/>
        <end position="72"/>
    </location>
</feature>
<feature type="zinc finger region" description="C2H2-type 1" evidence="1">
    <location>
        <begin position="204"/>
        <end position="226"/>
    </location>
</feature>
<feature type="zinc finger region" description="C2H2-type 2" evidence="1">
    <location>
        <begin position="232"/>
        <end position="254"/>
    </location>
</feature>
<feature type="zinc finger region" description="C2H2-type 3" evidence="1">
    <location>
        <begin position="260"/>
        <end position="282"/>
    </location>
</feature>
<feature type="zinc finger region" description="C2H2-type 4" evidence="1">
    <location>
        <begin position="288"/>
        <end position="310"/>
    </location>
</feature>
<feature type="zinc finger region" description="C2H2-type 5" evidence="1">
    <location>
        <begin position="316"/>
        <end position="338"/>
    </location>
</feature>
<feature type="zinc finger region" description="C2H2-type 6" evidence="1">
    <location>
        <begin position="344"/>
        <end position="366"/>
    </location>
</feature>
<feature type="zinc finger region" description="C2H2-type 7" evidence="1">
    <location>
        <begin position="372"/>
        <end position="394"/>
    </location>
</feature>
<sequence>MTFEDVAVEFSQWEWGQLNPAQKDLYREVMLENFRNLAILGLLVSKPYVICQLEEGGEPFMVEREISTGAHSDWKRRSKSKESMPSWGISKEELFQVVSVEKHIQDVLQFSKLKAACGCDGQLEMQQIKQERHLKQMSTIHKSATTLSRDYKWNGFGRSLGLRSVLVNQHSILMGEGSYKCDTEFRQTLGGNNSQRTHPEKKSCKCNECGKSFHFQSELRRHQRCHTGEKPYECSDCGRAFGHISSLIKHQRTHTGEKPYECSECGRAFSQSSSLVLHYRFHTGEKPYKCNECGRAFGHTSSLIKHQRTHTGEKPYECRECGRTFSQSSSLIVHYRFHTGEKPYKCNKCGRAFSQSSSLTQHYRFHTGEKPYKCNECGRAFAHTASLIKHQRSHAGKKTL</sequence>
<dbReference type="EMBL" id="AK027363">
    <property type="protein sequence ID" value="BAB55064.1"/>
    <property type="molecule type" value="mRNA"/>
</dbReference>
<dbReference type="EMBL" id="AL832263">
    <property type="protein sequence ID" value="CAI46170.1"/>
    <property type="molecule type" value="mRNA"/>
</dbReference>
<dbReference type="EMBL" id="AC092835">
    <property type="protein sequence ID" value="AAX88981.1"/>
    <property type="molecule type" value="Genomic_DNA"/>
</dbReference>
<dbReference type="EMBL" id="BC074900">
    <property type="protein sequence ID" value="AAH74900.1"/>
    <property type="molecule type" value="mRNA"/>
</dbReference>
<dbReference type="EMBL" id="BC074901">
    <property type="protein sequence ID" value="AAH74901.1"/>
    <property type="molecule type" value="mRNA"/>
</dbReference>
<dbReference type="EMBL" id="BC110524">
    <property type="protein sequence ID" value="AAI10525.1"/>
    <property type="molecule type" value="mRNA"/>
</dbReference>
<dbReference type="EMBL" id="BC110525">
    <property type="protein sequence ID" value="AAI10526.1"/>
    <property type="molecule type" value="mRNA"/>
</dbReference>
<dbReference type="CCDS" id="CCDS2011.1"/>
<dbReference type="RefSeq" id="NP_001304934.1">
    <property type="nucleotide sequence ID" value="NM_001318005.1"/>
</dbReference>
<dbReference type="RefSeq" id="NP_116177.1">
    <property type="nucleotide sequence ID" value="NM_032788.3"/>
</dbReference>
<dbReference type="RefSeq" id="XP_006712869.1">
    <property type="nucleotide sequence ID" value="XM_006712806.2"/>
</dbReference>
<dbReference type="SMR" id="Q96K75"/>
<dbReference type="BioGRID" id="124319">
    <property type="interactions" value="21"/>
</dbReference>
<dbReference type="FunCoup" id="Q96K75">
    <property type="interactions" value="18"/>
</dbReference>
<dbReference type="IntAct" id="Q96K75">
    <property type="interactions" value="23"/>
</dbReference>
<dbReference type="MINT" id="Q96K75"/>
<dbReference type="STRING" id="9606.ENSP00000295208"/>
<dbReference type="GlyGen" id="Q96K75">
    <property type="glycosylation" value="1 site, 1 O-linked glycan (1 site)"/>
</dbReference>
<dbReference type="iPTMnet" id="Q96K75"/>
<dbReference type="PhosphoSitePlus" id="Q96K75"/>
<dbReference type="BioMuta" id="ZNF514"/>
<dbReference type="DMDM" id="42560003"/>
<dbReference type="MassIVE" id="Q96K75"/>
<dbReference type="PaxDb" id="9606-ENSP00000295208"/>
<dbReference type="PeptideAtlas" id="Q96K75"/>
<dbReference type="ProteomicsDB" id="77046"/>
<dbReference type="Antibodypedia" id="32302">
    <property type="antibodies" value="111 antibodies from 16 providers"/>
</dbReference>
<dbReference type="DNASU" id="84874"/>
<dbReference type="Ensembl" id="ENST00000295208.7">
    <property type="protein sequence ID" value="ENSP00000295208.2"/>
    <property type="gene ID" value="ENSG00000144026.14"/>
</dbReference>
<dbReference type="Ensembl" id="ENST00000411425.1">
    <property type="protein sequence ID" value="ENSP00000405509.1"/>
    <property type="gene ID" value="ENSG00000144026.14"/>
</dbReference>
<dbReference type="Ensembl" id="ENST00000695481.2">
    <property type="protein sequence ID" value="ENSP00000511953.1"/>
    <property type="gene ID" value="ENSG00000144026.14"/>
</dbReference>
<dbReference type="Ensembl" id="ENST00000698720.1">
    <property type="protein sequence ID" value="ENSP00000513894.1"/>
    <property type="gene ID" value="ENSG00000144026.14"/>
</dbReference>
<dbReference type="Ensembl" id="ENST00000698721.1">
    <property type="protein sequence ID" value="ENSP00000513895.1"/>
    <property type="gene ID" value="ENSG00000144026.14"/>
</dbReference>
<dbReference type="Ensembl" id="ENST00000698722.1">
    <property type="protein sequence ID" value="ENSP00000513896.1"/>
    <property type="gene ID" value="ENSG00000144026.14"/>
</dbReference>
<dbReference type="Ensembl" id="ENST00000698723.1">
    <property type="protein sequence ID" value="ENSP00000513897.1"/>
    <property type="gene ID" value="ENSG00000144026.14"/>
</dbReference>
<dbReference type="GeneID" id="84874"/>
<dbReference type="KEGG" id="hsa:84874"/>
<dbReference type="MANE-Select" id="ENST00000295208.7">
    <property type="protein sequence ID" value="ENSP00000295208.2"/>
    <property type="RefSeq nucleotide sequence ID" value="NM_032788.3"/>
    <property type="RefSeq protein sequence ID" value="NP_116177.1"/>
</dbReference>
<dbReference type="UCSC" id="uc002sue.2">
    <property type="organism name" value="human"/>
</dbReference>
<dbReference type="AGR" id="HGNC:25894"/>
<dbReference type="CTD" id="84874"/>
<dbReference type="GeneCards" id="ZNF514"/>
<dbReference type="HGNC" id="HGNC:25894">
    <property type="gene designation" value="ZNF514"/>
</dbReference>
<dbReference type="HPA" id="ENSG00000144026">
    <property type="expression patterns" value="Low tissue specificity"/>
</dbReference>
<dbReference type="neXtProt" id="NX_Q96K75"/>
<dbReference type="OpenTargets" id="ENSG00000144026"/>
<dbReference type="PharmGKB" id="PA134978837"/>
<dbReference type="VEuPathDB" id="HostDB:ENSG00000144026"/>
<dbReference type="eggNOG" id="KOG1721">
    <property type="taxonomic scope" value="Eukaryota"/>
</dbReference>
<dbReference type="GeneTree" id="ENSGT00940000163499"/>
<dbReference type="HOGENOM" id="CLU_002678_0_7_1"/>
<dbReference type="InParanoid" id="Q96K75"/>
<dbReference type="OMA" id="STDWEKR"/>
<dbReference type="OrthoDB" id="9826699at2759"/>
<dbReference type="PAN-GO" id="Q96K75">
    <property type="GO annotations" value="4 GO annotations based on evolutionary models"/>
</dbReference>
<dbReference type="PhylomeDB" id="Q96K75"/>
<dbReference type="TreeFam" id="TF337055"/>
<dbReference type="PathwayCommons" id="Q96K75"/>
<dbReference type="Reactome" id="R-HSA-212436">
    <property type="pathway name" value="Generic Transcription Pathway"/>
</dbReference>
<dbReference type="SignaLink" id="Q96K75"/>
<dbReference type="BioGRID-ORCS" id="84874">
    <property type="hits" value="11 hits in 1179 CRISPR screens"/>
</dbReference>
<dbReference type="ChiTaRS" id="ZNF514">
    <property type="organism name" value="human"/>
</dbReference>
<dbReference type="GenomeRNAi" id="84874"/>
<dbReference type="Pharos" id="Q96K75">
    <property type="development level" value="Tdark"/>
</dbReference>
<dbReference type="PRO" id="PR:Q96K75"/>
<dbReference type="Proteomes" id="UP000005640">
    <property type="component" value="Chromosome 2"/>
</dbReference>
<dbReference type="RNAct" id="Q96K75">
    <property type="molecule type" value="protein"/>
</dbReference>
<dbReference type="Bgee" id="ENSG00000144026">
    <property type="expression patterns" value="Expressed in endothelial cell and 183 other cell types or tissues"/>
</dbReference>
<dbReference type="ExpressionAtlas" id="Q96K75">
    <property type="expression patterns" value="baseline and differential"/>
</dbReference>
<dbReference type="GO" id="GO:0005634">
    <property type="term" value="C:nucleus"/>
    <property type="evidence" value="ECO:0000318"/>
    <property type="project" value="GO_Central"/>
</dbReference>
<dbReference type="GO" id="GO:0000981">
    <property type="term" value="F:DNA-binding transcription factor activity, RNA polymerase II-specific"/>
    <property type="evidence" value="ECO:0000318"/>
    <property type="project" value="GO_Central"/>
</dbReference>
<dbReference type="GO" id="GO:0000978">
    <property type="term" value="F:RNA polymerase II cis-regulatory region sequence-specific DNA binding"/>
    <property type="evidence" value="ECO:0000318"/>
    <property type="project" value="GO_Central"/>
</dbReference>
<dbReference type="GO" id="GO:0008270">
    <property type="term" value="F:zinc ion binding"/>
    <property type="evidence" value="ECO:0007669"/>
    <property type="project" value="UniProtKB-KW"/>
</dbReference>
<dbReference type="GO" id="GO:0006357">
    <property type="term" value="P:regulation of transcription by RNA polymerase II"/>
    <property type="evidence" value="ECO:0000318"/>
    <property type="project" value="GO_Central"/>
</dbReference>
<dbReference type="CDD" id="cd07765">
    <property type="entry name" value="KRAB_A-box"/>
    <property type="match status" value="1"/>
</dbReference>
<dbReference type="FunFam" id="3.30.160.60:FF:002343">
    <property type="entry name" value="Zinc finger protein 33A"/>
    <property type="match status" value="1"/>
</dbReference>
<dbReference type="FunFam" id="3.30.160.60:FF:000016">
    <property type="entry name" value="zinc finger protein 37 homolog"/>
    <property type="match status" value="5"/>
</dbReference>
<dbReference type="FunFam" id="3.30.160.60:FF:002090">
    <property type="entry name" value="Zinc finger protein 473"/>
    <property type="match status" value="1"/>
</dbReference>
<dbReference type="Gene3D" id="6.10.140.140">
    <property type="match status" value="1"/>
</dbReference>
<dbReference type="Gene3D" id="3.30.160.60">
    <property type="entry name" value="Classic Zinc Finger"/>
    <property type="match status" value="7"/>
</dbReference>
<dbReference type="InterPro" id="IPR001909">
    <property type="entry name" value="KRAB"/>
</dbReference>
<dbReference type="InterPro" id="IPR036051">
    <property type="entry name" value="KRAB_dom_sf"/>
</dbReference>
<dbReference type="InterPro" id="IPR036236">
    <property type="entry name" value="Znf_C2H2_sf"/>
</dbReference>
<dbReference type="InterPro" id="IPR013087">
    <property type="entry name" value="Znf_C2H2_type"/>
</dbReference>
<dbReference type="PANTHER" id="PTHR23226">
    <property type="entry name" value="ZINC FINGER AND SCAN DOMAIN-CONTAINING"/>
    <property type="match status" value="1"/>
</dbReference>
<dbReference type="PANTHER" id="PTHR23226:SF366">
    <property type="entry name" value="ZINC FINGER PROTEIN ZFP2"/>
    <property type="match status" value="1"/>
</dbReference>
<dbReference type="Pfam" id="PF01352">
    <property type="entry name" value="KRAB"/>
    <property type="match status" value="1"/>
</dbReference>
<dbReference type="Pfam" id="PF00096">
    <property type="entry name" value="zf-C2H2"/>
    <property type="match status" value="7"/>
</dbReference>
<dbReference type="SMART" id="SM00349">
    <property type="entry name" value="KRAB"/>
    <property type="match status" value="1"/>
</dbReference>
<dbReference type="SMART" id="SM00355">
    <property type="entry name" value="ZnF_C2H2"/>
    <property type="match status" value="7"/>
</dbReference>
<dbReference type="SUPFAM" id="SSF57667">
    <property type="entry name" value="beta-beta-alpha zinc fingers"/>
    <property type="match status" value="4"/>
</dbReference>
<dbReference type="SUPFAM" id="SSF109640">
    <property type="entry name" value="KRAB domain (Kruppel-associated box)"/>
    <property type="match status" value="1"/>
</dbReference>
<dbReference type="PROSITE" id="PS50805">
    <property type="entry name" value="KRAB"/>
    <property type="match status" value="1"/>
</dbReference>
<dbReference type="PROSITE" id="PS00028">
    <property type="entry name" value="ZINC_FINGER_C2H2_1"/>
    <property type="match status" value="7"/>
</dbReference>
<dbReference type="PROSITE" id="PS50157">
    <property type="entry name" value="ZINC_FINGER_C2H2_2"/>
    <property type="match status" value="7"/>
</dbReference>
<name>ZN514_HUMAN</name>
<protein>
    <recommendedName>
        <fullName>Zinc finger protein 514</fullName>
    </recommendedName>
</protein>
<reference key="1">
    <citation type="journal article" date="2004" name="Nat. Genet.">
        <title>Complete sequencing and characterization of 21,243 full-length human cDNAs.</title>
        <authorList>
            <person name="Ota T."/>
            <person name="Suzuki Y."/>
            <person name="Nishikawa T."/>
            <person name="Otsuki T."/>
            <person name="Sugiyama T."/>
            <person name="Irie R."/>
            <person name="Wakamatsu A."/>
            <person name="Hayashi K."/>
            <person name="Sato H."/>
            <person name="Nagai K."/>
            <person name="Kimura K."/>
            <person name="Makita H."/>
            <person name="Sekine M."/>
            <person name="Obayashi M."/>
            <person name="Nishi T."/>
            <person name="Shibahara T."/>
            <person name="Tanaka T."/>
            <person name="Ishii S."/>
            <person name="Yamamoto J."/>
            <person name="Saito K."/>
            <person name="Kawai Y."/>
            <person name="Isono Y."/>
            <person name="Nakamura Y."/>
            <person name="Nagahari K."/>
            <person name="Murakami K."/>
            <person name="Yasuda T."/>
            <person name="Iwayanagi T."/>
            <person name="Wagatsuma M."/>
            <person name="Shiratori A."/>
            <person name="Sudo H."/>
            <person name="Hosoiri T."/>
            <person name="Kaku Y."/>
            <person name="Kodaira H."/>
            <person name="Kondo H."/>
            <person name="Sugawara M."/>
            <person name="Takahashi M."/>
            <person name="Kanda K."/>
            <person name="Yokoi T."/>
            <person name="Furuya T."/>
            <person name="Kikkawa E."/>
            <person name="Omura Y."/>
            <person name="Abe K."/>
            <person name="Kamihara K."/>
            <person name="Katsuta N."/>
            <person name="Sato K."/>
            <person name="Tanikawa M."/>
            <person name="Yamazaki M."/>
            <person name="Ninomiya K."/>
            <person name="Ishibashi T."/>
            <person name="Yamashita H."/>
            <person name="Murakawa K."/>
            <person name="Fujimori K."/>
            <person name="Tanai H."/>
            <person name="Kimata M."/>
            <person name="Watanabe M."/>
            <person name="Hiraoka S."/>
            <person name="Chiba Y."/>
            <person name="Ishida S."/>
            <person name="Ono Y."/>
            <person name="Takiguchi S."/>
            <person name="Watanabe S."/>
            <person name="Yosida M."/>
            <person name="Hotuta T."/>
            <person name="Kusano J."/>
            <person name="Kanehori K."/>
            <person name="Takahashi-Fujii A."/>
            <person name="Hara H."/>
            <person name="Tanase T.-O."/>
            <person name="Nomura Y."/>
            <person name="Togiya S."/>
            <person name="Komai F."/>
            <person name="Hara R."/>
            <person name="Takeuchi K."/>
            <person name="Arita M."/>
            <person name="Imose N."/>
            <person name="Musashino K."/>
            <person name="Yuuki H."/>
            <person name="Oshima A."/>
            <person name="Sasaki N."/>
            <person name="Aotsuka S."/>
            <person name="Yoshikawa Y."/>
            <person name="Matsunawa H."/>
            <person name="Ichihara T."/>
            <person name="Shiohata N."/>
            <person name="Sano S."/>
            <person name="Moriya S."/>
            <person name="Momiyama H."/>
            <person name="Satoh N."/>
            <person name="Takami S."/>
            <person name="Terashima Y."/>
            <person name="Suzuki O."/>
            <person name="Nakagawa S."/>
            <person name="Senoh A."/>
            <person name="Mizoguchi H."/>
            <person name="Goto Y."/>
            <person name="Shimizu F."/>
            <person name="Wakebe H."/>
            <person name="Hishigaki H."/>
            <person name="Watanabe T."/>
            <person name="Sugiyama A."/>
            <person name="Takemoto M."/>
            <person name="Kawakami B."/>
            <person name="Yamazaki M."/>
            <person name="Watanabe K."/>
            <person name="Kumagai A."/>
            <person name="Itakura S."/>
            <person name="Fukuzumi Y."/>
            <person name="Fujimori Y."/>
            <person name="Komiyama M."/>
            <person name="Tashiro H."/>
            <person name="Tanigami A."/>
            <person name="Fujiwara T."/>
            <person name="Ono T."/>
            <person name="Yamada K."/>
            <person name="Fujii Y."/>
            <person name="Ozaki K."/>
            <person name="Hirao M."/>
            <person name="Ohmori Y."/>
            <person name="Kawabata A."/>
            <person name="Hikiji T."/>
            <person name="Kobatake N."/>
            <person name="Inagaki H."/>
            <person name="Ikema Y."/>
            <person name="Okamoto S."/>
            <person name="Okitani R."/>
            <person name="Kawakami T."/>
            <person name="Noguchi S."/>
            <person name="Itoh T."/>
            <person name="Shigeta K."/>
            <person name="Senba T."/>
            <person name="Matsumura K."/>
            <person name="Nakajima Y."/>
            <person name="Mizuno T."/>
            <person name="Morinaga M."/>
            <person name="Sasaki M."/>
            <person name="Togashi T."/>
            <person name="Oyama M."/>
            <person name="Hata H."/>
            <person name="Watanabe M."/>
            <person name="Komatsu T."/>
            <person name="Mizushima-Sugano J."/>
            <person name="Satoh T."/>
            <person name="Shirai Y."/>
            <person name="Takahashi Y."/>
            <person name="Nakagawa K."/>
            <person name="Okumura K."/>
            <person name="Nagase T."/>
            <person name="Nomura N."/>
            <person name="Kikuchi H."/>
            <person name="Masuho Y."/>
            <person name="Yamashita R."/>
            <person name="Nakai K."/>
            <person name="Yada T."/>
            <person name="Nakamura Y."/>
            <person name="Ohara O."/>
            <person name="Isogai T."/>
            <person name="Sugano S."/>
        </authorList>
    </citation>
    <scope>NUCLEOTIDE SEQUENCE [LARGE SCALE MRNA]</scope>
    <source>
        <tissue>Embryo</tissue>
    </source>
</reference>
<reference key="2">
    <citation type="journal article" date="2007" name="BMC Genomics">
        <title>The full-ORF clone resource of the German cDNA consortium.</title>
        <authorList>
            <person name="Bechtel S."/>
            <person name="Rosenfelder H."/>
            <person name="Duda A."/>
            <person name="Schmidt C.P."/>
            <person name="Ernst U."/>
            <person name="Wellenreuther R."/>
            <person name="Mehrle A."/>
            <person name="Schuster C."/>
            <person name="Bahr A."/>
            <person name="Bloecker H."/>
            <person name="Heubner D."/>
            <person name="Hoerlein A."/>
            <person name="Michel G."/>
            <person name="Wedler H."/>
            <person name="Koehrer K."/>
            <person name="Ottenwaelder B."/>
            <person name="Poustka A."/>
            <person name="Wiemann S."/>
            <person name="Schupp I."/>
        </authorList>
    </citation>
    <scope>NUCLEOTIDE SEQUENCE [LARGE SCALE MRNA]</scope>
    <source>
        <tissue>Lymph node</tissue>
    </source>
</reference>
<reference key="3">
    <citation type="journal article" date="2005" name="Nature">
        <title>Generation and annotation of the DNA sequences of human chromosomes 2 and 4.</title>
        <authorList>
            <person name="Hillier L.W."/>
            <person name="Graves T.A."/>
            <person name="Fulton R.S."/>
            <person name="Fulton L.A."/>
            <person name="Pepin K.H."/>
            <person name="Minx P."/>
            <person name="Wagner-McPherson C."/>
            <person name="Layman D."/>
            <person name="Wylie K."/>
            <person name="Sekhon M."/>
            <person name="Becker M.C."/>
            <person name="Fewell G.A."/>
            <person name="Delehaunty K.D."/>
            <person name="Miner T.L."/>
            <person name="Nash W.E."/>
            <person name="Kremitzki C."/>
            <person name="Oddy L."/>
            <person name="Du H."/>
            <person name="Sun H."/>
            <person name="Bradshaw-Cordum H."/>
            <person name="Ali J."/>
            <person name="Carter J."/>
            <person name="Cordes M."/>
            <person name="Harris A."/>
            <person name="Isak A."/>
            <person name="van Brunt A."/>
            <person name="Nguyen C."/>
            <person name="Du F."/>
            <person name="Courtney L."/>
            <person name="Kalicki J."/>
            <person name="Ozersky P."/>
            <person name="Abbott S."/>
            <person name="Armstrong J."/>
            <person name="Belter E.A."/>
            <person name="Caruso L."/>
            <person name="Cedroni M."/>
            <person name="Cotton M."/>
            <person name="Davidson T."/>
            <person name="Desai A."/>
            <person name="Elliott G."/>
            <person name="Erb T."/>
            <person name="Fronick C."/>
            <person name="Gaige T."/>
            <person name="Haakenson W."/>
            <person name="Haglund K."/>
            <person name="Holmes A."/>
            <person name="Harkins R."/>
            <person name="Kim K."/>
            <person name="Kruchowski S.S."/>
            <person name="Strong C.M."/>
            <person name="Grewal N."/>
            <person name="Goyea E."/>
            <person name="Hou S."/>
            <person name="Levy A."/>
            <person name="Martinka S."/>
            <person name="Mead K."/>
            <person name="McLellan M.D."/>
            <person name="Meyer R."/>
            <person name="Randall-Maher J."/>
            <person name="Tomlinson C."/>
            <person name="Dauphin-Kohlberg S."/>
            <person name="Kozlowicz-Reilly A."/>
            <person name="Shah N."/>
            <person name="Swearengen-Shahid S."/>
            <person name="Snider J."/>
            <person name="Strong J.T."/>
            <person name="Thompson J."/>
            <person name="Yoakum M."/>
            <person name="Leonard S."/>
            <person name="Pearman C."/>
            <person name="Trani L."/>
            <person name="Radionenko M."/>
            <person name="Waligorski J.E."/>
            <person name="Wang C."/>
            <person name="Rock S.M."/>
            <person name="Tin-Wollam A.-M."/>
            <person name="Maupin R."/>
            <person name="Latreille P."/>
            <person name="Wendl M.C."/>
            <person name="Yang S.-P."/>
            <person name="Pohl C."/>
            <person name="Wallis J.W."/>
            <person name="Spieth J."/>
            <person name="Bieri T.A."/>
            <person name="Berkowicz N."/>
            <person name="Nelson J.O."/>
            <person name="Osborne J."/>
            <person name="Ding L."/>
            <person name="Meyer R."/>
            <person name="Sabo A."/>
            <person name="Shotland Y."/>
            <person name="Sinha P."/>
            <person name="Wohldmann P.E."/>
            <person name="Cook L.L."/>
            <person name="Hickenbotham M.T."/>
            <person name="Eldred J."/>
            <person name="Williams D."/>
            <person name="Jones T.A."/>
            <person name="She X."/>
            <person name="Ciccarelli F.D."/>
            <person name="Izaurralde E."/>
            <person name="Taylor J."/>
            <person name="Schmutz J."/>
            <person name="Myers R.M."/>
            <person name="Cox D.R."/>
            <person name="Huang X."/>
            <person name="McPherson J.D."/>
            <person name="Mardis E.R."/>
            <person name="Clifton S.W."/>
            <person name="Warren W.C."/>
            <person name="Chinwalla A.T."/>
            <person name="Eddy S.R."/>
            <person name="Marra M.A."/>
            <person name="Ovcharenko I."/>
            <person name="Furey T.S."/>
            <person name="Miller W."/>
            <person name="Eichler E.E."/>
            <person name="Bork P."/>
            <person name="Suyama M."/>
            <person name="Torrents D."/>
            <person name="Waterston R.H."/>
            <person name="Wilson R.K."/>
        </authorList>
    </citation>
    <scope>NUCLEOTIDE SEQUENCE [LARGE SCALE GENOMIC DNA]</scope>
</reference>
<reference key="4">
    <citation type="journal article" date="2004" name="Genome Res.">
        <title>The status, quality, and expansion of the NIH full-length cDNA project: the Mammalian Gene Collection (MGC).</title>
        <authorList>
            <consortium name="The MGC Project Team"/>
        </authorList>
    </citation>
    <scope>NUCLEOTIDE SEQUENCE [LARGE SCALE MRNA]</scope>
    <source>
        <tissue>Lung</tissue>
    </source>
</reference>
<keyword id="KW-0238">DNA-binding</keyword>
<keyword id="KW-0479">Metal-binding</keyword>
<keyword id="KW-0539">Nucleus</keyword>
<keyword id="KW-1267">Proteomics identification</keyword>
<keyword id="KW-1185">Reference proteome</keyword>
<keyword id="KW-0677">Repeat</keyword>
<keyword id="KW-0804">Transcription</keyword>
<keyword id="KW-0805">Transcription regulation</keyword>
<keyword id="KW-0862">Zinc</keyword>
<keyword id="KW-0863">Zinc-finger</keyword>
<organism>
    <name type="scientific">Homo sapiens</name>
    <name type="common">Human</name>
    <dbReference type="NCBI Taxonomy" id="9606"/>
    <lineage>
        <taxon>Eukaryota</taxon>
        <taxon>Metazoa</taxon>
        <taxon>Chordata</taxon>
        <taxon>Craniata</taxon>
        <taxon>Vertebrata</taxon>
        <taxon>Euteleostomi</taxon>
        <taxon>Mammalia</taxon>
        <taxon>Eutheria</taxon>
        <taxon>Euarchontoglires</taxon>
        <taxon>Primates</taxon>
        <taxon>Haplorrhini</taxon>
        <taxon>Catarrhini</taxon>
        <taxon>Hominidae</taxon>
        <taxon>Homo</taxon>
    </lineage>
</organism>